<feature type="chain" id="PRO_0000401986" description="Methylthioribose-1-phosphate isomerase">
    <location>
        <begin position="1"/>
        <end position="364"/>
    </location>
</feature>
<feature type="active site" description="Proton donor" evidence="1">
    <location>
        <position position="254"/>
    </location>
</feature>
<feature type="site" description="Transition state stabilizer" evidence="1">
    <location>
        <position position="174"/>
    </location>
</feature>
<reference key="1">
    <citation type="journal article" date="2007" name="Nature">
        <title>Evolution of genes and genomes on the Drosophila phylogeny.</title>
        <authorList>
            <consortium name="Drosophila 12 genomes consortium"/>
        </authorList>
    </citation>
    <scope>NUCLEOTIDE SEQUENCE [LARGE SCALE GENOMIC DNA]</scope>
    <source>
        <strain>Tai18E2 / Tucson 14021-0261.01</strain>
    </source>
</reference>
<name>MTNA_DROYA</name>
<dbReference type="EC" id="5.3.1.23" evidence="1"/>
<dbReference type="EMBL" id="CM000160">
    <property type="protein sequence ID" value="EDW99224.1"/>
    <property type="molecule type" value="Genomic_DNA"/>
</dbReference>
<dbReference type="SMR" id="B4PNE2"/>
<dbReference type="EnsemblMetazoa" id="FBtr0269833">
    <property type="protein sequence ID" value="FBpp0268325"/>
    <property type="gene ID" value="FBgn0240510"/>
</dbReference>
<dbReference type="EnsemblMetazoa" id="FBtr0404550">
    <property type="protein sequence ID" value="FBpp0363254"/>
    <property type="gene ID" value="FBgn0240510"/>
</dbReference>
<dbReference type="EnsemblMetazoa" id="XM_002099476.4">
    <property type="protein sequence ID" value="XP_002099512.1"/>
    <property type="gene ID" value="LOC6539010"/>
</dbReference>
<dbReference type="EnsemblMetazoa" id="XM_015193677.3">
    <property type="protein sequence ID" value="XP_015049163.1"/>
    <property type="gene ID" value="LOC6539010"/>
</dbReference>
<dbReference type="GeneID" id="6539010"/>
<dbReference type="KEGG" id="dya:Dyak_GE23315"/>
<dbReference type="eggNOG" id="KOG1468">
    <property type="taxonomic scope" value="Eukaryota"/>
</dbReference>
<dbReference type="HOGENOM" id="CLU_016218_1_3_1"/>
<dbReference type="OMA" id="CETRPLN"/>
<dbReference type="OrthoDB" id="2461at2759"/>
<dbReference type="PhylomeDB" id="B4PNE2"/>
<dbReference type="UniPathway" id="UPA00904">
    <property type="reaction ID" value="UER00874"/>
</dbReference>
<dbReference type="Proteomes" id="UP000002282">
    <property type="component" value="Chromosome 3R"/>
</dbReference>
<dbReference type="GO" id="GO:0005737">
    <property type="term" value="C:cytoplasm"/>
    <property type="evidence" value="ECO:0007669"/>
    <property type="project" value="UniProtKB-SubCell"/>
</dbReference>
<dbReference type="GO" id="GO:0005634">
    <property type="term" value="C:nucleus"/>
    <property type="evidence" value="ECO:0007669"/>
    <property type="project" value="UniProtKB-SubCell"/>
</dbReference>
<dbReference type="GO" id="GO:0046523">
    <property type="term" value="F:S-methyl-5-thioribose-1-phosphate isomerase activity"/>
    <property type="evidence" value="ECO:0007669"/>
    <property type="project" value="UniProtKB-UniRule"/>
</dbReference>
<dbReference type="GO" id="GO:0019509">
    <property type="term" value="P:L-methionine salvage from methylthioadenosine"/>
    <property type="evidence" value="ECO:0007669"/>
    <property type="project" value="UniProtKB-UniRule"/>
</dbReference>
<dbReference type="FunFam" id="1.20.120.420:FF:000010">
    <property type="entry name" value="Methylthioribose-1-phosphate isomerase"/>
    <property type="match status" value="1"/>
</dbReference>
<dbReference type="FunFam" id="3.40.50.10470:FF:000003">
    <property type="entry name" value="Methylthioribose-1-phosphate isomerase"/>
    <property type="match status" value="1"/>
</dbReference>
<dbReference type="Gene3D" id="1.20.120.420">
    <property type="entry name" value="translation initiation factor eif-2b, domain 1"/>
    <property type="match status" value="1"/>
</dbReference>
<dbReference type="Gene3D" id="3.40.50.10470">
    <property type="entry name" value="Translation initiation factor eif-2b, domain 2"/>
    <property type="match status" value="1"/>
</dbReference>
<dbReference type="HAMAP" id="MF_01678">
    <property type="entry name" value="Salvage_MtnA"/>
    <property type="match status" value="1"/>
</dbReference>
<dbReference type="InterPro" id="IPR000649">
    <property type="entry name" value="IF-2B-related"/>
</dbReference>
<dbReference type="InterPro" id="IPR005251">
    <property type="entry name" value="IF-M1Pi"/>
</dbReference>
<dbReference type="InterPro" id="IPR042529">
    <property type="entry name" value="IF_2B-like_C"/>
</dbReference>
<dbReference type="InterPro" id="IPR011559">
    <property type="entry name" value="Initiation_fac_2B_a/b/d"/>
</dbReference>
<dbReference type="InterPro" id="IPR027363">
    <property type="entry name" value="M1Pi_N"/>
</dbReference>
<dbReference type="InterPro" id="IPR037171">
    <property type="entry name" value="NagB/RpiA_transferase-like"/>
</dbReference>
<dbReference type="NCBIfam" id="TIGR00524">
    <property type="entry name" value="eIF-2B_rel"/>
    <property type="match status" value="1"/>
</dbReference>
<dbReference type="NCBIfam" id="NF004326">
    <property type="entry name" value="PRK05720.1"/>
    <property type="match status" value="1"/>
</dbReference>
<dbReference type="NCBIfam" id="TIGR00512">
    <property type="entry name" value="salvage_mtnA"/>
    <property type="match status" value="1"/>
</dbReference>
<dbReference type="PANTHER" id="PTHR43475">
    <property type="entry name" value="METHYLTHIORIBOSE-1-PHOSPHATE ISOMERASE"/>
    <property type="match status" value="1"/>
</dbReference>
<dbReference type="PANTHER" id="PTHR43475:SF1">
    <property type="entry name" value="METHYLTHIORIBOSE-1-PHOSPHATE ISOMERASE"/>
    <property type="match status" value="1"/>
</dbReference>
<dbReference type="Pfam" id="PF01008">
    <property type="entry name" value="IF-2B"/>
    <property type="match status" value="1"/>
</dbReference>
<dbReference type="SUPFAM" id="SSF100950">
    <property type="entry name" value="NagB/RpiA/CoA transferase-like"/>
    <property type="match status" value="1"/>
</dbReference>
<evidence type="ECO:0000255" key="1">
    <source>
        <dbReference type="HAMAP-Rule" id="MF_03119"/>
    </source>
</evidence>
<accession>B4PNE2</accession>
<protein>
    <recommendedName>
        <fullName evidence="1">Methylthioribose-1-phosphate isomerase</fullName>
        <shortName evidence="1">M1Pi</shortName>
        <shortName evidence="1">MTR-1-P isomerase</shortName>
        <ecNumber evidence="1">5.3.1.23</ecNumber>
    </recommendedName>
    <alternativeName>
        <fullName evidence="1">S-methyl-5-thioribose-1-phosphate isomerase</fullName>
    </alternativeName>
    <alternativeName>
        <fullName evidence="1">Translation initiation factor eIF-2B subunit alpha/beta/delta-like protein</fullName>
    </alternativeName>
</protein>
<organism>
    <name type="scientific">Drosophila yakuba</name>
    <name type="common">Fruit fly</name>
    <dbReference type="NCBI Taxonomy" id="7245"/>
    <lineage>
        <taxon>Eukaryota</taxon>
        <taxon>Metazoa</taxon>
        <taxon>Ecdysozoa</taxon>
        <taxon>Arthropoda</taxon>
        <taxon>Hexapoda</taxon>
        <taxon>Insecta</taxon>
        <taxon>Pterygota</taxon>
        <taxon>Neoptera</taxon>
        <taxon>Endopterygota</taxon>
        <taxon>Diptera</taxon>
        <taxon>Brachycera</taxon>
        <taxon>Muscomorpha</taxon>
        <taxon>Ephydroidea</taxon>
        <taxon>Drosophilidae</taxon>
        <taxon>Drosophila</taxon>
        <taxon>Sophophora</taxon>
    </lineage>
</organism>
<sequence>MSLQSIKYSRGSLEILDQLLLPGQSKYLVVRGVEDGWKVINKMQVRGAPAIAIVGCLSLAVEINPEDFETKKSLRQEIEGKLNYLVSARPTAVNMKIAADELITLANDLYKDEAINVTEMKQRFLDATEAMLKKDIADNRAIGANGAKAILQRVAETGAAPAGSTGSVRVLTHCNTGSLATAGYGTALGVVRQLAELGKLEHVYCTETRPYNQGARLTAYELVHEKFPATLVLDSMVAALLRAKNVAAVVVGADRVASNGDTANKIGTYQIAVVAKHHDVPFYVAAPLTSIDLAIPGGDHIIIEERPDREMTHVGEHRIAAPGINCWNPAFDVTPASLITGIITERGVFKPAELKEAITKLLES</sequence>
<keyword id="KW-0028">Amino-acid biosynthesis</keyword>
<keyword id="KW-0963">Cytoplasm</keyword>
<keyword id="KW-0413">Isomerase</keyword>
<keyword id="KW-0486">Methionine biosynthesis</keyword>
<keyword id="KW-0539">Nucleus</keyword>
<gene>
    <name type="ORF">GE23315</name>
</gene>
<proteinExistence type="inferred from homology"/>
<comment type="function">
    <text evidence="1">Catalyzes the interconversion of methylthioribose-1-phosphate (MTR-1-P) into methylthioribulose-1-phosphate (MTRu-1-P).</text>
</comment>
<comment type="catalytic activity">
    <reaction evidence="1">
        <text>5-(methylsulfanyl)-alpha-D-ribose 1-phosphate = 5-(methylsulfanyl)-D-ribulose 1-phosphate</text>
        <dbReference type="Rhea" id="RHEA:19989"/>
        <dbReference type="ChEBI" id="CHEBI:58533"/>
        <dbReference type="ChEBI" id="CHEBI:58548"/>
        <dbReference type="EC" id="5.3.1.23"/>
    </reaction>
</comment>
<comment type="pathway">
    <text evidence="1">Amino-acid biosynthesis; L-methionine biosynthesis via salvage pathway; L-methionine from S-methyl-5-thio-alpha-D-ribose 1-phosphate: step 1/6.</text>
</comment>
<comment type="subcellular location">
    <subcellularLocation>
        <location evidence="1">Cytoplasm</location>
    </subcellularLocation>
    <subcellularLocation>
        <location evidence="1">Nucleus</location>
    </subcellularLocation>
</comment>
<comment type="similarity">
    <text evidence="1">Belongs to the eIF-2B alpha/beta/delta subunits family. MtnA subfamily.</text>
</comment>